<protein>
    <recommendedName>
        <fullName evidence="1">Glucans biosynthesis protein G</fullName>
    </recommendedName>
</protein>
<feature type="signal peptide" evidence="1">
    <location>
        <begin position="1"/>
        <end position="33"/>
    </location>
</feature>
<feature type="chain" id="PRO_1000064561" description="Glucans biosynthesis protein G">
    <location>
        <begin position="34"/>
        <end position="522"/>
    </location>
</feature>
<reference key="1">
    <citation type="journal article" date="2004" name="Proc. Natl. Acad. Sci. U.S.A.">
        <title>Genome sequence of the enterobacterial phytopathogen Erwinia carotovora subsp. atroseptica and characterization of virulence factors.</title>
        <authorList>
            <person name="Bell K.S."/>
            <person name="Sebaihia M."/>
            <person name="Pritchard L."/>
            <person name="Holden M.T.G."/>
            <person name="Hyman L.J."/>
            <person name="Holeva M.C."/>
            <person name="Thomson N.R."/>
            <person name="Bentley S.D."/>
            <person name="Churcher L.J.C."/>
            <person name="Mungall K."/>
            <person name="Atkin R."/>
            <person name="Bason N."/>
            <person name="Brooks K."/>
            <person name="Chillingworth T."/>
            <person name="Clark K."/>
            <person name="Doggett J."/>
            <person name="Fraser A."/>
            <person name="Hance Z."/>
            <person name="Hauser H."/>
            <person name="Jagels K."/>
            <person name="Moule S."/>
            <person name="Norbertczak H."/>
            <person name="Ormond D."/>
            <person name="Price C."/>
            <person name="Quail M.A."/>
            <person name="Sanders M."/>
            <person name="Walker D."/>
            <person name="Whitehead S."/>
            <person name="Salmond G.P.C."/>
            <person name="Birch P.R.J."/>
            <person name="Parkhill J."/>
            <person name="Toth I.K."/>
        </authorList>
    </citation>
    <scope>NUCLEOTIDE SEQUENCE [LARGE SCALE GENOMIC DNA]</scope>
    <source>
        <strain>SCRI 1043 / ATCC BAA-672</strain>
    </source>
</reference>
<organism>
    <name type="scientific">Pectobacterium atrosepticum (strain SCRI 1043 / ATCC BAA-672)</name>
    <name type="common">Erwinia carotovora subsp. atroseptica</name>
    <dbReference type="NCBI Taxonomy" id="218491"/>
    <lineage>
        <taxon>Bacteria</taxon>
        <taxon>Pseudomonadati</taxon>
        <taxon>Pseudomonadota</taxon>
        <taxon>Gammaproteobacteria</taxon>
        <taxon>Enterobacterales</taxon>
        <taxon>Pectobacteriaceae</taxon>
        <taxon>Pectobacterium</taxon>
    </lineage>
</organism>
<evidence type="ECO:0000255" key="1">
    <source>
        <dbReference type="HAMAP-Rule" id="MF_01069"/>
    </source>
</evidence>
<keyword id="KW-0574">Periplasm</keyword>
<keyword id="KW-1185">Reference proteome</keyword>
<keyword id="KW-0732">Signal</keyword>
<proteinExistence type="inferred from homology"/>
<sequence>MLDNKFGFKQRVASLRWLSAAIMLSVSAVPAWAFSIDDVAQQAEKLAQKGFEAPKSNLPAQFRDMKFADYQQIRFNNDKSYWNNVQTPFKLQFYHQGMYFDTPVKINEVTATTVDEIKYAPEFFDFGPVNHDPESVKNLGFAGFKVLYPINKADKNDEIVSMLGASYFRVVGKGQIYGLSARGLAIDTALPSGEEFPRFREFWIERPKPNDKHLVIYALLDSPRAAGAYRFTVYPGRDSVVDVQAKVFLRDKVGKLGIAPLTSMYLFGPNQPSPTLNYRPALNDSNGLSIHAGNGEWIWRPLNNPKHLSVSTYAVENPKGFGLLQRGRDFTSYEDLDDRYDLRPSGWIEPKGEWGKGKVELVEIPTADETNDNIVAFWTPDVLPETGKPLDVKYRLHFTRDEDQLHSPNIAYVQQTRRSAGDVKQSNLIRQPDGTIAYIVDFIGPNLKELDENAPVASQVSIGDNGEIVENNVRYNPVTHGWRLTLRVRVKDAKQPTEMRAALVNGETTLTETWSNQLPANE</sequence>
<name>OPGG_PECAS</name>
<dbReference type="EMBL" id="BX950851">
    <property type="protein sequence ID" value="CAG74682.1"/>
    <property type="molecule type" value="Genomic_DNA"/>
</dbReference>
<dbReference type="SMR" id="Q6D6A8"/>
<dbReference type="STRING" id="218491.ECA1777"/>
<dbReference type="KEGG" id="eca:ECA1777"/>
<dbReference type="PATRIC" id="fig|218491.5.peg.1804"/>
<dbReference type="eggNOG" id="COG3131">
    <property type="taxonomic scope" value="Bacteria"/>
</dbReference>
<dbReference type="HOGENOM" id="CLU_023403_2_0_6"/>
<dbReference type="UniPathway" id="UPA00637"/>
<dbReference type="Proteomes" id="UP000007966">
    <property type="component" value="Chromosome"/>
</dbReference>
<dbReference type="GO" id="GO:0030288">
    <property type="term" value="C:outer membrane-bounded periplasmic space"/>
    <property type="evidence" value="ECO:0007669"/>
    <property type="project" value="TreeGrafter"/>
</dbReference>
<dbReference type="GO" id="GO:0030246">
    <property type="term" value="F:carbohydrate binding"/>
    <property type="evidence" value="ECO:0007669"/>
    <property type="project" value="InterPro"/>
</dbReference>
<dbReference type="GO" id="GO:0003824">
    <property type="term" value="F:catalytic activity"/>
    <property type="evidence" value="ECO:0007669"/>
    <property type="project" value="InterPro"/>
</dbReference>
<dbReference type="GO" id="GO:0051274">
    <property type="term" value="P:beta-glucan biosynthetic process"/>
    <property type="evidence" value="ECO:0007669"/>
    <property type="project" value="TreeGrafter"/>
</dbReference>
<dbReference type="FunFam" id="2.70.98.10:FF:000001">
    <property type="entry name" value="Glucans biosynthesis protein G"/>
    <property type="match status" value="1"/>
</dbReference>
<dbReference type="Gene3D" id="2.70.98.10">
    <property type="match status" value="1"/>
</dbReference>
<dbReference type="Gene3D" id="2.60.40.10">
    <property type="entry name" value="Immunoglobulins"/>
    <property type="match status" value="1"/>
</dbReference>
<dbReference type="HAMAP" id="MF_01069">
    <property type="entry name" value="MdoG_OpgG"/>
    <property type="match status" value="1"/>
</dbReference>
<dbReference type="InterPro" id="IPR011013">
    <property type="entry name" value="Gal_mutarotase_sf_dom"/>
</dbReference>
<dbReference type="InterPro" id="IPR014718">
    <property type="entry name" value="GH-type_carb-bd"/>
</dbReference>
<dbReference type="InterPro" id="IPR014438">
    <property type="entry name" value="Glucan_biosyn_MdoG/MdoD"/>
</dbReference>
<dbReference type="InterPro" id="IPR007444">
    <property type="entry name" value="Glucan_biosyn_MdoG_C"/>
</dbReference>
<dbReference type="InterPro" id="IPR013783">
    <property type="entry name" value="Ig-like_fold"/>
</dbReference>
<dbReference type="InterPro" id="IPR014756">
    <property type="entry name" value="Ig_E-set"/>
</dbReference>
<dbReference type="InterPro" id="IPR023704">
    <property type="entry name" value="MdoG_OpgG"/>
</dbReference>
<dbReference type="PANTHER" id="PTHR30504">
    <property type="entry name" value="GLUCANS BIOSYNTHESIS PROTEIN"/>
    <property type="match status" value="1"/>
</dbReference>
<dbReference type="PANTHER" id="PTHR30504:SF4">
    <property type="entry name" value="GLUCANS BIOSYNTHESIS PROTEIN G"/>
    <property type="match status" value="1"/>
</dbReference>
<dbReference type="Pfam" id="PF04349">
    <property type="entry name" value="MdoG"/>
    <property type="match status" value="1"/>
</dbReference>
<dbReference type="PIRSF" id="PIRSF006281">
    <property type="entry name" value="MdoG"/>
    <property type="match status" value="1"/>
</dbReference>
<dbReference type="SUPFAM" id="SSF81296">
    <property type="entry name" value="E set domains"/>
    <property type="match status" value="1"/>
</dbReference>
<dbReference type="SUPFAM" id="SSF74650">
    <property type="entry name" value="Galactose mutarotase-like"/>
    <property type="match status" value="1"/>
</dbReference>
<accession>Q6D6A8</accession>
<comment type="function">
    <text evidence="1">Involved in the biosynthesis of osmoregulated periplasmic glucans (OPGs).</text>
</comment>
<comment type="pathway">
    <text evidence="1">Glycan metabolism; osmoregulated periplasmic glucan (OPG) biosynthesis.</text>
</comment>
<comment type="subcellular location">
    <subcellularLocation>
        <location evidence="1">Periplasm</location>
    </subcellularLocation>
</comment>
<comment type="similarity">
    <text evidence="1">Belongs to the OpgD/OpgG family.</text>
</comment>
<gene>
    <name evidence="1" type="primary">mdoG</name>
    <name evidence="1" type="synonym">opgG</name>
    <name type="ordered locus">ECA1777</name>
</gene>